<keyword id="KW-0903">Direct protein sequencing</keyword>
<keyword id="KW-1015">Disulfide bond</keyword>
<keyword id="KW-0872">Ion channel impairing toxin</keyword>
<keyword id="KW-0960">Knottin</keyword>
<keyword id="KW-0964">Secreted</keyword>
<keyword id="KW-0732">Signal</keyword>
<keyword id="KW-0800">Toxin</keyword>
<proteinExistence type="evidence at protein level"/>
<accession>D2Y255</accession>
<feature type="signal peptide" evidence="2">
    <location>
        <begin position="1"/>
        <end position="21"/>
    </location>
</feature>
<feature type="propeptide" id="PRO_0000400861" evidence="3">
    <location>
        <begin position="22"/>
        <end position="74"/>
    </location>
</feature>
<feature type="peptide" id="PRO_0000400862" description="U11-theraphotoxin-Hhn1a">
    <location>
        <begin position="75"/>
        <end position="113"/>
    </location>
</feature>
<feature type="disulfide bond" evidence="1">
    <location>
        <begin position="75"/>
        <end position="90"/>
    </location>
</feature>
<feature type="disulfide bond" evidence="1">
    <location>
        <begin position="82"/>
        <end position="95"/>
    </location>
</feature>
<feature type="disulfide bond" evidence="1">
    <location>
        <begin position="89"/>
        <end position="110"/>
    </location>
</feature>
<comment type="function">
    <text evidence="1">Probable ion channel inhibitor.</text>
</comment>
<comment type="subcellular location">
    <subcellularLocation>
        <location>Secreted</location>
    </subcellularLocation>
</comment>
<comment type="tissue specificity">
    <text>Expressed by the venom gland.</text>
</comment>
<comment type="domain">
    <text evidence="1">The presence of a 'disulfide through disulfide knot' structurally defines this protein as a knottin.</text>
</comment>
<comment type="similarity">
    <text evidence="4">Belongs to the neurotoxin 14 (magi-1) family. 01 (HNTX-16) subfamily.</text>
</comment>
<organism>
    <name type="scientific">Cyriopagopus hainanus</name>
    <name type="common">Chinese bird spider</name>
    <name type="synonym">Haplopelma hainanum</name>
    <dbReference type="NCBI Taxonomy" id="209901"/>
    <lineage>
        <taxon>Eukaryota</taxon>
        <taxon>Metazoa</taxon>
        <taxon>Ecdysozoa</taxon>
        <taxon>Arthropoda</taxon>
        <taxon>Chelicerata</taxon>
        <taxon>Arachnida</taxon>
        <taxon>Araneae</taxon>
        <taxon>Mygalomorphae</taxon>
        <taxon>Theraphosidae</taxon>
        <taxon>Haplopelma</taxon>
    </lineage>
</organism>
<sequence length="113" mass="13059">MNTVRVTFLLVFVLAVSLGQADKDENRMVMQEKTEQGKSYLDFAENLLLQKLEELEAKLLEEDSEESRNSRQKRCIGEGVPCDENDPRCCSGLVCLKPTLHGIWYKSYYCYKK</sequence>
<evidence type="ECO:0000250" key="1"/>
<evidence type="ECO:0000255" key="2"/>
<evidence type="ECO:0000269" key="3">
    <source>
    </source>
</evidence>
<evidence type="ECO:0000305" key="4"/>
<name>H16A3_CYRHA</name>
<protein>
    <recommendedName>
        <fullName>U11-theraphotoxin-Hhn1a</fullName>
        <shortName>U11-TRTX-Hhn1a</shortName>
    </recommendedName>
    <alternativeName>
        <fullName>Hainantoxin-XVI.3</fullName>
        <shortName>HNTX-XVI.3</shortName>
    </alternativeName>
    <alternativeName>
        <fullName>Peptide F4-19.87</fullName>
    </alternativeName>
</protein>
<dbReference type="EMBL" id="GU292932">
    <property type="protein sequence ID" value="ADB56748.1"/>
    <property type="molecule type" value="mRNA"/>
</dbReference>
<dbReference type="ArachnoServer" id="AS001592">
    <property type="toxin name" value="U11-theraphotoxin-Hhn1a"/>
</dbReference>
<dbReference type="GO" id="GO:0005576">
    <property type="term" value="C:extracellular region"/>
    <property type="evidence" value="ECO:0007669"/>
    <property type="project" value="UniProtKB-SubCell"/>
</dbReference>
<dbReference type="GO" id="GO:0019871">
    <property type="term" value="F:sodium channel inhibitor activity"/>
    <property type="evidence" value="ECO:0007669"/>
    <property type="project" value="InterPro"/>
</dbReference>
<dbReference type="GO" id="GO:0090729">
    <property type="term" value="F:toxin activity"/>
    <property type="evidence" value="ECO:0007669"/>
    <property type="project" value="UniProtKB-KW"/>
</dbReference>
<dbReference type="InterPro" id="IPR012627">
    <property type="entry name" value="Toxin_22"/>
</dbReference>
<dbReference type="Pfam" id="PF08092">
    <property type="entry name" value="Toxin_22"/>
    <property type="match status" value="1"/>
</dbReference>
<reference key="1">
    <citation type="journal article" date="2010" name="J. Proteome Res.">
        <title>Molecular diversification of peptide toxins from the tarantula Haplopelma hainanum (Ornithoctonus hainana) venom based on transcriptomic, peptidomic, and genomic analyses.</title>
        <authorList>
            <person name="Tang X."/>
            <person name="Zhang Y."/>
            <person name="Hu W."/>
            <person name="Xu D."/>
            <person name="Tao H."/>
            <person name="Yang X."/>
            <person name="Li Y."/>
            <person name="Jiang L."/>
            <person name="Liang S."/>
        </authorList>
    </citation>
    <scope>NUCLEOTIDE SEQUENCE [LARGE SCALE MRNA]</scope>
    <scope>PROTEIN SEQUENCE OF 75-113</scope>
    <scope>IDENTIFICATION BY MASS SPECTROMETRY</scope>
    <source>
        <tissue>Venom</tissue>
        <tissue>Venom gland</tissue>
    </source>
</reference>